<reference key="1">
    <citation type="submission" date="2008-12" db="EMBL/GenBank/DDBJ databases">
        <title>Complete sequence of chromosome of Shewanella baltica OS223.</title>
        <authorList>
            <consortium name="US DOE Joint Genome Institute"/>
            <person name="Lucas S."/>
            <person name="Copeland A."/>
            <person name="Lapidus A."/>
            <person name="Glavina del Rio T."/>
            <person name="Dalin E."/>
            <person name="Tice H."/>
            <person name="Bruce D."/>
            <person name="Goodwin L."/>
            <person name="Pitluck S."/>
            <person name="Chertkov O."/>
            <person name="Meincke L."/>
            <person name="Brettin T."/>
            <person name="Detter J.C."/>
            <person name="Han C."/>
            <person name="Kuske C.R."/>
            <person name="Larimer F."/>
            <person name="Land M."/>
            <person name="Hauser L."/>
            <person name="Kyrpides N."/>
            <person name="Ovchinnikova G."/>
            <person name="Brettar I."/>
            <person name="Rodrigues J."/>
            <person name="Konstantinidis K."/>
            <person name="Tiedje J."/>
        </authorList>
    </citation>
    <scope>NUCLEOTIDE SEQUENCE [LARGE SCALE GENOMIC DNA]</scope>
    <source>
        <strain>OS223</strain>
    </source>
</reference>
<feature type="chain" id="PRO_1000125450" description="ATP-dependent protease ATPase subunit HslU">
    <location>
        <begin position="1"/>
        <end position="442"/>
    </location>
</feature>
<feature type="region of interest" description="Disordered" evidence="2">
    <location>
        <begin position="137"/>
        <end position="156"/>
    </location>
</feature>
<feature type="binding site" evidence="1">
    <location>
        <position position="18"/>
    </location>
    <ligand>
        <name>ATP</name>
        <dbReference type="ChEBI" id="CHEBI:30616"/>
    </ligand>
</feature>
<feature type="binding site" evidence="1">
    <location>
        <begin position="60"/>
        <end position="65"/>
    </location>
    <ligand>
        <name>ATP</name>
        <dbReference type="ChEBI" id="CHEBI:30616"/>
    </ligand>
</feature>
<feature type="binding site" evidence="1">
    <location>
        <position position="255"/>
    </location>
    <ligand>
        <name>ATP</name>
        <dbReference type="ChEBI" id="CHEBI:30616"/>
    </ligand>
</feature>
<feature type="binding site" evidence="1">
    <location>
        <position position="320"/>
    </location>
    <ligand>
        <name>ATP</name>
        <dbReference type="ChEBI" id="CHEBI:30616"/>
    </ligand>
</feature>
<feature type="binding site" evidence="1">
    <location>
        <position position="392"/>
    </location>
    <ligand>
        <name>ATP</name>
        <dbReference type="ChEBI" id="CHEBI:30616"/>
    </ligand>
</feature>
<keyword id="KW-0067">ATP-binding</keyword>
<keyword id="KW-0143">Chaperone</keyword>
<keyword id="KW-0963">Cytoplasm</keyword>
<keyword id="KW-0547">Nucleotide-binding</keyword>
<keyword id="KW-0346">Stress response</keyword>
<evidence type="ECO:0000255" key="1">
    <source>
        <dbReference type="HAMAP-Rule" id="MF_00249"/>
    </source>
</evidence>
<evidence type="ECO:0000256" key="2">
    <source>
        <dbReference type="SAM" id="MobiDB-lite"/>
    </source>
</evidence>
<comment type="function">
    <text evidence="1">ATPase subunit of a proteasome-like degradation complex; this subunit has chaperone activity. The binding of ATP and its subsequent hydrolysis by HslU are essential for unfolding of protein substrates subsequently hydrolyzed by HslV. HslU recognizes the N-terminal part of its protein substrates and unfolds these before they are guided to HslV for hydrolysis.</text>
</comment>
<comment type="subunit">
    <text evidence="1">A double ring-shaped homohexamer of HslV is capped on each side by a ring-shaped HslU homohexamer. The assembly of the HslU/HslV complex is dependent on binding of ATP.</text>
</comment>
<comment type="subcellular location">
    <subcellularLocation>
        <location evidence="1">Cytoplasm</location>
    </subcellularLocation>
</comment>
<comment type="similarity">
    <text evidence="1">Belongs to the ClpX chaperone family. HslU subfamily.</text>
</comment>
<sequence length="442" mass="50006">MSEMTPREIVHELDAHIIGQQKAKRSVAVALRNRWRRMQLDVDFRQEVTPKNILMIGPTGVGKTEIARRLAKLANAPFIKVEATKYTEVGYVGKEVEQIIRDLTDIAIKLTREQQMGKCRQRAEENAEERILDALLPKPKNDWESTETDSSSNTRQVFRKKLREGQLDDKEIDIDVAQPQVGVEIMSPPGMEEMTNQLQSLFKNMGQAPAKRRKMKIKEAFKLLIEEEAAKLVNQEDLKEQAIEMVEQHGIVFLDEIDKICKRGETSGPDVSREGVQRDLLPLIEGCTVTTKHGMVKTDHILFIASGAFQMSKPSDLIPELQGRLPIRVELDALSANDFKRILTEPHASLTEQYIALMNTEGVKVEFSESGIDSIAKAAWQVNERTENIGARRLHTVMEKLMEDISYEASEKSGSAFVIDADYVSAHLDNLVQDEDLSRFIL</sequence>
<name>HSLU_SHEB2</name>
<gene>
    <name evidence="1" type="primary">hslU</name>
    <name type="ordered locus">Sbal223_0472</name>
</gene>
<proteinExistence type="inferred from homology"/>
<accession>B8E6E3</accession>
<dbReference type="EMBL" id="CP001252">
    <property type="protein sequence ID" value="ACK45006.1"/>
    <property type="molecule type" value="Genomic_DNA"/>
</dbReference>
<dbReference type="RefSeq" id="WP_006083301.1">
    <property type="nucleotide sequence ID" value="NC_011663.1"/>
</dbReference>
<dbReference type="SMR" id="B8E6E3"/>
<dbReference type="GeneID" id="11770797"/>
<dbReference type="KEGG" id="sbp:Sbal223_0472"/>
<dbReference type="HOGENOM" id="CLU_033123_0_0_6"/>
<dbReference type="Proteomes" id="UP000002507">
    <property type="component" value="Chromosome"/>
</dbReference>
<dbReference type="GO" id="GO:0009376">
    <property type="term" value="C:HslUV protease complex"/>
    <property type="evidence" value="ECO:0007669"/>
    <property type="project" value="UniProtKB-UniRule"/>
</dbReference>
<dbReference type="GO" id="GO:0005524">
    <property type="term" value="F:ATP binding"/>
    <property type="evidence" value="ECO:0007669"/>
    <property type="project" value="UniProtKB-UniRule"/>
</dbReference>
<dbReference type="GO" id="GO:0016887">
    <property type="term" value="F:ATP hydrolysis activity"/>
    <property type="evidence" value="ECO:0007669"/>
    <property type="project" value="InterPro"/>
</dbReference>
<dbReference type="GO" id="GO:0008233">
    <property type="term" value="F:peptidase activity"/>
    <property type="evidence" value="ECO:0007669"/>
    <property type="project" value="InterPro"/>
</dbReference>
<dbReference type="GO" id="GO:0036402">
    <property type="term" value="F:proteasome-activating activity"/>
    <property type="evidence" value="ECO:0007669"/>
    <property type="project" value="UniProtKB-UniRule"/>
</dbReference>
<dbReference type="GO" id="GO:0043335">
    <property type="term" value="P:protein unfolding"/>
    <property type="evidence" value="ECO:0007669"/>
    <property type="project" value="UniProtKB-UniRule"/>
</dbReference>
<dbReference type="GO" id="GO:0051603">
    <property type="term" value="P:proteolysis involved in protein catabolic process"/>
    <property type="evidence" value="ECO:0007669"/>
    <property type="project" value="TreeGrafter"/>
</dbReference>
<dbReference type="CDD" id="cd19498">
    <property type="entry name" value="RecA-like_HslU"/>
    <property type="match status" value="1"/>
</dbReference>
<dbReference type="FunFam" id="1.10.8.10:FF:000028">
    <property type="entry name" value="ATP-dependent protease ATPase subunit HslU"/>
    <property type="match status" value="1"/>
</dbReference>
<dbReference type="FunFam" id="1.10.8.60:FF:000027">
    <property type="entry name" value="ATP-dependent protease ATPase subunit HslU"/>
    <property type="match status" value="1"/>
</dbReference>
<dbReference type="FunFam" id="3.40.50.300:FF:000213">
    <property type="entry name" value="ATP-dependent protease ATPase subunit HslU"/>
    <property type="match status" value="1"/>
</dbReference>
<dbReference type="FunFam" id="3.40.50.300:FF:000220">
    <property type="entry name" value="ATP-dependent protease ATPase subunit HslU"/>
    <property type="match status" value="1"/>
</dbReference>
<dbReference type="Gene3D" id="1.10.8.60">
    <property type="match status" value="1"/>
</dbReference>
<dbReference type="Gene3D" id="3.40.50.300">
    <property type="entry name" value="P-loop containing nucleotide triphosphate hydrolases"/>
    <property type="match status" value="2"/>
</dbReference>
<dbReference type="HAMAP" id="MF_00249">
    <property type="entry name" value="HslU"/>
    <property type="match status" value="1"/>
</dbReference>
<dbReference type="InterPro" id="IPR003593">
    <property type="entry name" value="AAA+_ATPase"/>
</dbReference>
<dbReference type="InterPro" id="IPR050052">
    <property type="entry name" value="ATP-dep_Clp_protease_ClpX"/>
</dbReference>
<dbReference type="InterPro" id="IPR003959">
    <property type="entry name" value="ATPase_AAA_core"/>
</dbReference>
<dbReference type="InterPro" id="IPR019489">
    <property type="entry name" value="Clp_ATPase_C"/>
</dbReference>
<dbReference type="InterPro" id="IPR004491">
    <property type="entry name" value="HslU"/>
</dbReference>
<dbReference type="InterPro" id="IPR027417">
    <property type="entry name" value="P-loop_NTPase"/>
</dbReference>
<dbReference type="NCBIfam" id="TIGR00390">
    <property type="entry name" value="hslU"/>
    <property type="match status" value="1"/>
</dbReference>
<dbReference type="NCBIfam" id="NF003544">
    <property type="entry name" value="PRK05201.1"/>
    <property type="match status" value="1"/>
</dbReference>
<dbReference type="PANTHER" id="PTHR48102">
    <property type="entry name" value="ATP-DEPENDENT CLP PROTEASE ATP-BINDING SUBUNIT CLPX-LIKE, MITOCHONDRIAL-RELATED"/>
    <property type="match status" value="1"/>
</dbReference>
<dbReference type="PANTHER" id="PTHR48102:SF3">
    <property type="entry name" value="ATP-DEPENDENT PROTEASE ATPASE SUBUNIT HSLU"/>
    <property type="match status" value="1"/>
</dbReference>
<dbReference type="Pfam" id="PF00004">
    <property type="entry name" value="AAA"/>
    <property type="match status" value="1"/>
</dbReference>
<dbReference type="Pfam" id="PF07724">
    <property type="entry name" value="AAA_2"/>
    <property type="match status" value="1"/>
</dbReference>
<dbReference type="SMART" id="SM00382">
    <property type="entry name" value="AAA"/>
    <property type="match status" value="1"/>
</dbReference>
<dbReference type="SMART" id="SM01086">
    <property type="entry name" value="ClpB_D2-small"/>
    <property type="match status" value="1"/>
</dbReference>
<dbReference type="SUPFAM" id="SSF52540">
    <property type="entry name" value="P-loop containing nucleoside triphosphate hydrolases"/>
    <property type="match status" value="1"/>
</dbReference>
<protein>
    <recommendedName>
        <fullName evidence="1">ATP-dependent protease ATPase subunit HslU</fullName>
    </recommendedName>
    <alternativeName>
        <fullName evidence="1">Unfoldase HslU</fullName>
    </alternativeName>
</protein>
<organism>
    <name type="scientific">Shewanella baltica (strain OS223)</name>
    <dbReference type="NCBI Taxonomy" id="407976"/>
    <lineage>
        <taxon>Bacteria</taxon>
        <taxon>Pseudomonadati</taxon>
        <taxon>Pseudomonadota</taxon>
        <taxon>Gammaproteobacteria</taxon>
        <taxon>Alteromonadales</taxon>
        <taxon>Shewanellaceae</taxon>
        <taxon>Shewanella</taxon>
    </lineage>
</organism>